<reference key="1">
    <citation type="journal article" date="2005" name="Infect. Immun.">
        <title>Whole-genome analyses of speciation events in pathogenic Brucellae.</title>
        <authorList>
            <person name="Chain P.S."/>
            <person name="Comerci D.J."/>
            <person name="Tolmasky M.E."/>
            <person name="Larimer F.W."/>
            <person name="Malfatti S.A."/>
            <person name="Vergez L.M."/>
            <person name="Aguero F."/>
            <person name="Land M.L."/>
            <person name="Ugalde R.A."/>
            <person name="Garcia E."/>
        </authorList>
    </citation>
    <scope>NUCLEOTIDE SEQUENCE [LARGE SCALE GENOMIC DNA]</scope>
    <source>
        <strain>2308</strain>
    </source>
</reference>
<evidence type="ECO:0000255" key="1">
    <source>
        <dbReference type="HAMAP-Rule" id="MF_00073"/>
    </source>
</evidence>
<proteinExistence type="inferred from homology"/>
<comment type="function">
    <text evidence="1">Involved in transcription antitermination. Required for transcription of ribosomal RNA (rRNA) genes. Binds specifically to the boxA antiterminator sequence of the ribosomal RNA (rrn) operons.</text>
</comment>
<comment type="similarity">
    <text evidence="1">Belongs to the NusB family.</text>
</comment>
<dbReference type="EMBL" id="AM040264">
    <property type="protein sequence ID" value="CAJ10748.1"/>
    <property type="molecule type" value="Genomic_DNA"/>
</dbReference>
<dbReference type="RefSeq" id="WP_002963907.1">
    <property type="nucleotide sequence ID" value="NZ_KN046823.1"/>
</dbReference>
<dbReference type="SMR" id="Q2YNC5"/>
<dbReference type="STRING" id="359391.BAB1_0792"/>
<dbReference type="GeneID" id="93016840"/>
<dbReference type="KEGG" id="bmf:BAB1_0792"/>
<dbReference type="PATRIC" id="fig|359391.11.peg.3103"/>
<dbReference type="HOGENOM" id="CLU_087843_4_0_5"/>
<dbReference type="PhylomeDB" id="Q2YNC5"/>
<dbReference type="Proteomes" id="UP000002719">
    <property type="component" value="Chromosome I"/>
</dbReference>
<dbReference type="GO" id="GO:0005829">
    <property type="term" value="C:cytosol"/>
    <property type="evidence" value="ECO:0007669"/>
    <property type="project" value="TreeGrafter"/>
</dbReference>
<dbReference type="GO" id="GO:0003723">
    <property type="term" value="F:RNA binding"/>
    <property type="evidence" value="ECO:0007669"/>
    <property type="project" value="UniProtKB-UniRule"/>
</dbReference>
<dbReference type="GO" id="GO:0006353">
    <property type="term" value="P:DNA-templated transcription termination"/>
    <property type="evidence" value="ECO:0007669"/>
    <property type="project" value="UniProtKB-UniRule"/>
</dbReference>
<dbReference type="GO" id="GO:0031564">
    <property type="term" value="P:transcription antitermination"/>
    <property type="evidence" value="ECO:0007669"/>
    <property type="project" value="UniProtKB-KW"/>
</dbReference>
<dbReference type="Gene3D" id="1.10.940.10">
    <property type="entry name" value="NusB-like"/>
    <property type="match status" value="1"/>
</dbReference>
<dbReference type="HAMAP" id="MF_00073">
    <property type="entry name" value="NusB"/>
    <property type="match status" value="1"/>
</dbReference>
<dbReference type="InterPro" id="IPR035926">
    <property type="entry name" value="NusB-like_sf"/>
</dbReference>
<dbReference type="InterPro" id="IPR011605">
    <property type="entry name" value="NusB_fam"/>
</dbReference>
<dbReference type="InterPro" id="IPR006027">
    <property type="entry name" value="NusB_RsmB_TIM44"/>
</dbReference>
<dbReference type="NCBIfam" id="TIGR01951">
    <property type="entry name" value="nusB"/>
    <property type="match status" value="1"/>
</dbReference>
<dbReference type="PANTHER" id="PTHR11078:SF3">
    <property type="entry name" value="ANTITERMINATION NUSB DOMAIN-CONTAINING PROTEIN"/>
    <property type="match status" value="1"/>
</dbReference>
<dbReference type="PANTHER" id="PTHR11078">
    <property type="entry name" value="N UTILIZATION SUBSTANCE PROTEIN B-RELATED"/>
    <property type="match status" value="1"/>
</dbReference>
<dbReference type="Pfam" id="PF01029">
    <property type="entry name" value="NusB"/>
    <property type="match status" value="1"/>
</dbReference>
<dbReference type="SUPFAM" id="SSF48013">
    <property type="entry name" value="NusB-like"/>
    <property type="match status" value="1"/>
</dbReference>
<accession>Q2YNC5</accession>
<keyword id="KW-1185">Reference proteome</keyword>
<keyword id="KW-0694">RNA-binding</keyword>
<keyword id="KW-0804">Transcription</keyword>
<keyword id="KW-0889">Transcription antitermination</keyword>
<keyword id="KW-0805">Transcription regulation</keyword>
<protein>
    <recommendedName>
        <fullName evidence="1">Transcription antitermination protein NusB</fullName>
    </recommendedName>
    <alternativeName>
        <fullName evidence="1">Antitermination factor NusB</fullName>
    </alternativeName>
</protein>
<gene>
    <name evidence="1" type="primary">nusB</name>
    <name type="ordered locus">BAB1_0792</name>
</gene>
<sequence>MNSIPEGRPTPNLPRTANKRGVARLAAVQALFQMDVAGTGVMEVVAEYEAFRLGKEVDGTQYLDADPQWFRAIVAGVVEDQLKLDPMIHQALTEDWPLSRLDSTLRAILRAGAWELKARKDVPTAVIVSEYVDIAKAFYTEDEPKLVNAVLDRLALVIRGESRGAKPRHKS</sequence>
<organism>
    <name type="scientific">Brucella abortus (strain 2308)</name>
    <dbReference type="NCBI Taxonomy" id="359391"/>
    <lineage>
        <taxon>Bacteria</taxon>
        <taxon>Pseudomonadati</taxon>
        <taxon>Pseudomonadota</taxon>
        <taxon>Alphaproteobacteria</taxon>
        <taxon>Hyphomicrobiales</taxon>
        <taxon>Brucellaceae</taxon>
        <taxon>Brucella/Ochrobactrum group</taxon>
        <taxon>Brucella</taxon>
    </lineage>
</organism>
<feature type="chain" id="PRO_0000265494" description="Transcription antitermination protein NusB">
    <location>
        <begin position="1"/>
        <end position="171"/>
    </location>
</feature>
<name>NUSB_BRUA2</name>